<keyword id="KW-0002">3D-structure</keyword>
<keyword id="KW-0130">Cell adhesion</keyword>
<keyword id="KW-1003">Cell membrane</keyword>
<keyword id="KW-0145">Chemotaxis</keyword>
<keyword id="KW-0202">Cytokine</keyword>
<keyword id="KW-1015">Disulfide bond</keyword>
<keyword id="KW-0325">Glycoprotein</keyword>
<keyword id="KW-0945">Host-virus interaction</keyword>
<keyword id="KW-0395">Inflammatory response</keyword>
<keyword id="KW-0472">Membrane</keyword>
<keyword id="KW-1267">Proteomics identification</keyword>
<keyword id="KW-1185">Reference proteome</keyword>
<keyword id="KW-0964">Secreted</keyword>
<keyword id="KW-0732">Signal</keyword>
<keyword id="KW-0812">Transmembrane</keyword>
<keyword id="KW-1133">Transmembrane helix</keyword>
<evidence type="ECO:0000255" key="1"/>
<evidence type="ECO:0000256" key="2">
    <source>
        <dbReference type="SAM" id="MobiDB-lite"/>
    </source>
</evidence>
<evidence type="ECO:0000269" key="3">
    <source>
    </source>
</evidence>
<evidence type="ECO:0000269" key="4">
    <source>
    </source>
</evidence>
<evidence type="ECO:0000269" key="5">
    <source>
    </source>
</evidence>
<evidence type="ECO:0000269" key="6">
    <source>
    </source>
</evidence>
<evidence type="ECO:0000269" key="7">
    <source>
    </source>
</evidence>
<evidence type="ECO:0000269" key="8">
    <source>
    </source>
</evidence>
<evidence type="ECO:0000269" key="9">
    <source>
    </source>
</evidence>
<evidence type="ECO:0000269" key="10">
    <source>
    </source>
</evidence>
<evidence type="ECO:0000269" key="11">
    <source>
    </source>
</evidence>
<evidence type="ECO:0000269" key="12">
    <source>
    </source>
</evidence>
<evidence type="ECO:0000269" key="13">
    <source>
    </source>
</evidence>
<evidence type="ECO:0000269" key="14">
    <source>
    </source>
</evidence>
<evidence type="ECO:0000269" key="15">
    <source>
    </source>
</evidence>
<evidence type="ECO:0000269" key="16">
    <source>
    </source>
</evidence>
<evidence type="ECO:0000303" key="17">
    <source>
    </source>
</evidence>
<evidence type="ECO:0000303" key="18">
    <source>
    </source>
</evidence>
<evidence type="ECO:0000303" key="19">
    <source>
    </source>
</evidence>
<evidence type="ECO:0000305" key="20"/>
<evidence type="ECO:0000305" key="21">
    <source>
    </source>
</evidence>
<evidence type="ECO:0007744" key="22">
    <source>
        <dbReference type="PDB" id="4XT1"/>
    </source>
</evidence>
<evidence type="ECO:0007744" key="23">
    <source>
        <dbReference type="PDB" id="4XT3"/>
    </source>
</evidence>
<evidence type="ECO:0007744" key="24">
    <source>
        <dbReference type="PDB" id="5WB2"/>
    </source>
</evidence>
<evidence type="ECO:0007829" key="25">
    <source>
        <dbReference type="PDB" id="1F2L"/>
    </source>
</evidence>
<evidence type="ECO:0007829" key="26">
    <source>
        <dbReference type="PDB" id="3ONA"/>
    </source>
</evidence>
<evidence type="ECO:0007829" key="27">
    <source>
        <dbReference type="PDB" id="7RKM"/>
    </source>
</evidence>
<protein>
    <recommendedName>
        <fullName evidence="17">Fractalkine</fullName>
    </recommendedName>
    <alternativeName>
        <fullName evidence="18">C-X3-C motif chemokine 1</fullName>
    </alternativeName>
    <alternativeName>
        <fullName evidence="18">CX3C membrane-anchored chemokine</fullName>
    </alternativeName>
    <alternativeName>
        <fullName evidence="19">Neurotactin</fullName>
    </alternativeName>
    <alternativeName>
        <fullName>Small-inducible cytokine D1</fullName>
    </alternativeName>
    <component>
        <recommendedName>
            <fullName>Processed fractalkine</fullName>
        </recommendedName>
    </component>
</protein>
<name>X3CL1_HUMAN</name>
<organism>
    <name type="scientific">Homo sapiens</name>
    <name type="common">Human</name>
    <dbReference type="NCBI Taxonomy" id="9606"/>
    <lineage>
        <taxon>Eukaryota</taxon>
        <taxon>Metazoa</taxon>
        <taxon>Chordata</taxon>
        <taxon>Craniata</taxon>
        <taxon>Vertebrata</taxon>
        <taxon>Euteleostomi</taxon>
        <taxon>Mammalia</taxon>
        <taxon>Eutheria</taxon>
        <taxon>Euarchontoglires</taxon>
        <taxon>Primates</taxon>
        <taxon>Haplorrhini</taxon>
        <taxon>Catarrhini</taxon>
        <taxon>Hominidae</taxon>
        <taxon>Homo</taxon>
    </lineage>
</organism>
<proteinExistence type="evidence at protein level"/>
<reference key="1">
    <citation type="journal article" date="1997" name="Nature">
        <title>Neurotactin, a membrane-anchored chemokine upregulated in brain inflammation.</title>
        <authorList>
            <person name="Pan Y."/>
            <person name="Lloyd C."/>
            <person name="Zhou H."/>
            <person name="Dolich S."/>
            <person name="Deeds J."/>
            <person name="Gonzalo J.-A."/>
            <person name="Vath J."/>
            <person name="Gosselin M."/>
            <person name="Ma J."/>
            <person name="Dussault B."/>
            <person name="Woolf E."/>
            <person name="Alperin G."/>
            <person name="Culpepper J."/>
            <person name="Gutierrez-Ramos J.-C."/>
            <person name="Gearing D.P."/>
        </authorList>
    </citation>
    <scope>NUCLEOTIDE SEQUENCE [MRNA]</scope>
    <scope>FUNCTION</scope>
    <scope>TISSUE SPECIFICITY</scope>
</reference>
<reference key="2">
    <citation type="journal article" date="1997" name="Nature">
        <title>A new class of membrane-bound chemokine with a CX3C motif.</title>
        <authorList>
            <person name="Bazan J.F."/>
            <person name="Bacon K.B."/>
            <person name="Hardiman G."/>
            <person name="Wang W."/>
            <person name="Soo K."/>
            <person name="Rossi D."/>
            <person name="Greaves D.R."/>
            <person name="Zlotnik A."/>
            <person name="Schall T.J."/>
        </authorList>
    </citation>
    <scope>NUCLEOTIDE SEQUENCE [MRNA]</scope>
    <scope>FUNCTION</scope>
    <scope>TISSUE SPECIFICITY</scope>
    <scope>PROTEOLYTIC CLEAVAGE</scope>
    <scope>SUBCELLULAR LOCATION</scope>
    <scope>INDUCTION</scope>
</reference>
<reference key="3">
    <citation type="journal article" date="1999" name="Genomics">
        <title>Genome duplications and other features in 12 Mb of DNA sequence from human chromosome 16p and 16q.</title>
        <authorList>
            <person name="Loftus B.J."/>
            <person name="Kim U.-J."/>
            <person name="Sneddon V.P."/>
            <person name="Kalush F."/>
            <person name="Brandon R."/>
            <person name="Fuhrmann J."/>
            <person name="Mason T."/>
            <person name="Crosby M.L."/>
            <person name="Barnstead M."/>
            <person name="Cronin L."/>
            <person name="Mays A.D."/>
            <person name="Cao Y."/>
            <person name="Xu R.X."/>
            <person name="Kang H.-L."/>
            <person name="Mitchell S."/>
            <person name="Eichler E.E."/>
            <person name="Harris P.C."/>
            <person name="Venter J.C."/>
            <person name="Adams M.D."/>
        </authorList>
    </citation>
    <scope>NUCLEOTIDE SEQUENCE [LARGE SCALE GENOMIC DNA]</scope>
</reference>
<reference key="4">
    <citation type="journal article" date="2004" name="Genome Res.">
        <title>The status, quality, and expansion of the NIH full-length cDNA project: the Mammalian Gene Collection (MGC).</title>
        <authorList>
            <consortium name="The MGC Project Team"/>
        </authorList>
    </citation>
    <scope>NUCLEOTIDE SEQUENCE [LARGE SCALE MRNA]</scope>
    <source>
        <tissue>Brain</tissue>
    </source>
</reference>
<reference key="5">
    <citation type="journal article" date="1998" name="J. Exp. Med.">
        <title>Fractalkine and CX3CR1 mediate a novel mechanism of leukocyte capture, firm adhesion, and activation under physiologic flow.</title>
        <authorList>
            <person name="Fong A.M."/>
            <person name="Robinson L.A."/>
            <person name="Steeber D.A."/>
            <person name="Tedder T.F."/>
            <person name="Yoshie O."/>
            <person name="Imai T."/>
            <person name="Patel D.D."/>
        </authorList>
    </citation>
    <scope>FUNCTION</scope>
</reference>
<reference key="6">
    <citation type="journal article" date="2002" name="J. Immunol.">
        <title>Dual functions of fractalkine/CX3C ligand 1 in trafficking of perforin+/granzyme B+ cytotoxic effector lymphocytes that are defined by CX3CR1 expression.</title>
        <authorList>
            <person name="Nishimura M."/>
            <person name="Umehara H."/>
            <person name="Nakayama T."/>
            <person name="Yoneda O."/>
            <person name="Hieshima K."/>
            <person name="Kakizaki M."/>
            <person name="Dohmae N."/>
            <person name="Yoshie O."/>
            <person name="Imai T."/>
        </authorList>
    </citation>
    <scope>FUNCTION</scope>
</reference>
<reference key="7">
    <citation type="journal article" date="2009" name="Nat. Methods">
        <title>Enrichment of glycopeptides for glycan structure and attachment site identification.</title>
        <authorList>
            <person name="Nilsson J."/>
            <person name="Rueetschi U."/>
            <person name="Halim A."/>
            <person name="Hesse C."/>
            <person name="Carlsohn E."/>
            <person name="Brinkmalm G."/>
            <person name="Larson G."/>
        </authorList>
    </citation>
    <scope>GLYCOSYLATION [LARGE SCALE ANALYSIS] AT SER-253 AND THR-329</scope>
    <scope>STRUCTURE OF CARBOHYDRATES</scope>
    <source>
        <tissue>Cerebrospinal fluid</tissue>
    </source>
</reference>
<reference key="8">
    <citation type="journal article" date="2012" name="Mol. Cell. Proteomics">
        <title>Human urinary glycoproteomics; attachment site specific analysis of N- and O-linked glycosylations by CID and ECD.</title>
        <authorList>
            <person name="Halim A."/>
            <person name="Nilsson J."/>
            <person name="Ruetschi U."/>
            <person name="Hesse C."/>
            <person name="Larson G."/>
        </authorList>
    </citation>
    <scope>GLYCOSYLATION AT THR-183; SER-253 AND THR-329</scope>
    <scope>STRUCTURE OF CARBOHYDRATES</scope>
    <scope>IDENTIFICATION BY MASS SPECTROMETRY</scope>
</reference>
<reference key="9">
    <citation type="journal article" date="2012" name="J. Immunol.">
        <title>Integrins alphavbeta3 and alpha4beta1 act as coreceptors for fractalkine, and the integrin-binding defective mutant of fractalkine is an antagonist of CX3CR1.</title>
        <authorList>
            <person name="Fujita M."/>
            <person name="Takada Y.K."/>
            <person name="Takada Y."/>
        </authorList>
    </citation>
    <scope>FUNCTION</scope>
    <scope>BINDING TO CX3CR1 AND INTEGRINS</scope>
    <scope>IDENTIFICATION IN A COMPLEX WITH CX3CR1 AND INTEGRINS</scope>
    <scope>MUTAGENESIS OF LYS-60; ARG-61; ARG-71; LYS-78 AND LYS-83</scope>
</reference>
<reference key="10">
    <citation type="journal article" date="2014" name="J. Cell. Physiol.">
        <title>A role for the chemokine receptor CCR6 in mammalian sperm motility and chemotaxis.</title>
        <authorList>
            <person name="Caballero-Campo P."/>
            <person name="Buffone M.G."/>
            <person name="Benencia F."/>
            <person name="Conejo-Garcia J.R."/>
            <person name="Rinaudo P.F."/>
            <person name="Gerton G.L."/>
        </authorList>
    </citation>
    <scope>TISSUE SPECIFICITY</scope>
</reference>
<reference key="11">
    <citation type="journal article" date="2014" name="PLoS ONE">
        <title>The chemokine fractalkine can activate integrins without CX3CR1 through direct binding to a ligand-binding site distinct from the classical RGD-binding site.</title>
        <authorList>
            <person name="Fujita M."/>
            <person name="Takada Y.K."/>
            <person name="Takada Y."/>
        </authorList>
    </citation>
    <scope>FUNCTION</scope>
    <scope>BINDING TO INTEGRINS</scope>
    <scope>MUTAGENESIS OF LYS-60 AND ARG-61</scope>
</reference>
<reference key="12">
    <citation type="journal article" date="2016" name="Sci. Rep.">
        <title>Plasmodium falciparum proteins involved in cytoadherence of infected erythrocytes to chemokine CX3CL1.</title>
        <authorList>
            <person name="Hermand P."/>
            <person name="Ciceron L."/>
            <person name="Pionneau C."/>
            <person name="Vaquero C."/>
            <person name="Combadiere C."/>
            <person name="Deterre P."/>
        </authorList>
    </citation>
    <scope>FUNCTION (MICROBIAL INFECTION)</scope>
    <scope>INTERACTION WITH P.FALCIPARUM (STRAIN 3D7) CBP1 AND CBP2 (MICROBIAL INFECTION)</scope>
</reference>
<reference key="13">
    <citation type="journal article" date="1999" name="Biochemistry">
        <title>Solution structure and dynamics of the CX3C chemokine domain of fractalkine and its interaction with an N-terminal fragment of CX3CR1.</title>
        <authorList>
            <person name="Mizoue L.S."/>
            <person name="Bazan J.F."/>
            <person name="Johnson E.C."/>
            <person name="Handel T.M."/>
        </authorList>
    </citation>
    <scope>STRUCTURE BY NMR OF 25-100</scope>
    <scope>SUBUNIT</scope>
    <scope>BINDING TO CX3CR1</scope>
</reference>
<reference key="14">
    <citation type="journal article" date="2000" name="J. Biol. Chem.">
        <title>The crystal structure of the chemokine domain of fractalkine shows a novel quaternary arrangement.</title>
        <authorList>
            <person name="Hoover D.M."/>
            <person name="Mizoue L.S."/>
            <person name="Handel T.M."/>
            <person name="Lubkowski J."/>
        </authorList>
    </citation>
    <scope>X-RAY CRYSTALLOGRAPHY (2.0 ANGSTROMS) OF 25-98</scope>
    <scope>DISULFIDE BONDS</scope>
</reference>
<reference key="15">
    <citation type="journal article" date="2011" name="PLoS Pathog.">
        <title>Structural basis of chemokine sequestration by CrmD, a poxvirus-encoded tumor necrosis factor receptor.</title>
        <authorList>
            <person name="Xue X."/>
            <person name="Lu Q."/>
            <person name="Wei H."/>
            <person name="Wang D."/>
            <person name="Chen D."/>
            <person name="He G."/>
            <person name="Huang L."/>
            <person name="Wang H."/>
            <person name="Wang X."/>
        </authorList>
    </citation>
    <scope>X-RAY CRYSTALLOGRAPHY (2.6 ANGSTROMS) OF 24-100 IN COMPLEX WITH POX VIRUS CRMD</scope>
    <scope>FUNCTION</scope>
    <scope>INTERACTION WITH VIRAL CRMD</scope>
</reference>
<reference evidence="22 23" key="16">
    <citation type="journal article" date="2015" name="Science">
        <title>Structural basis for chemokine recognition and activation of a viral G protein-coupled receptor.</title>
        <authorList>
            <person name="Burg J.S."/>
            <person name="Ingram J.R."/>
            <person name="Venkatakrishnan A.J."/>
            <person name="Jude K.M."/>
            <person name="Dukkipati A."/>
            <person name="Feinberg E.N."/>
            <person name="Angelini A."/>
            <person name="Waghray D."/>
            <person name="Dror R.O."/>
            <person name="Ploegh H.L."/>
            <person name="Garcia K.C."/>
        </authorList>
    </citation>
    <scope>X-RAY CRYSTALLOGRAPHY (2.89 ANGSTROMS) OF 25-101</scope>
    <scope>INTERACTION WITH HHV-5 US28 (MICROBIAL INFECTION)</scope>
</reference>
<reference evidence="24" key="17">
    <citation type="journal article" date="2018" name="Elife">
        <title>Viral GPCR US28 can signal in response to chemokine agonists of nearly unlimited structural degeneracy.</title>
        <authorList>
            <person name="Miles T.F."/>
            <person name="Spiess K."/>
            <person name="Jude K.M."/>
            <person name="Tsutsumi N."/>
            <person name="Burg J.S."/>
            <person name="Ingram J.R."/>
            <person name="Waghray D."/>
            <person name="Hjorto G.M."/>
            <person name="Larsen O."/>
            <person name="Ploegh H.L."/>
            <person name="Rosenkilde M.M."/>
            <person name="Garcia K.C."/>
        </authorList>
    </citation>
    <scope>X-RAY CRYSTALLOGRAPHY (3.50 ANGSTROMS) OF 34-100</scope>
</reference>
<comment type="function">
    <text evidence="4 6 8 10 13 14 15 16">Chemokine that acts as a ligand for both CX3CR1 and integrins ITGAV:ITGB3 and ITGA4:ITGB1 (PubMed:12055230, PubMed:21829356, PubMed:23125415, PubMed:9782118, PubMed:9931005). The CX3CR1-CX3CL1 signaling exerts distinct functions in different tissue compartments, such as immune response, inflammation, cell adhesion and chemotaxis (PubMed:12055230, PubMed:9024663, PubMed:9177350, PubMed:9782118). Regulates leukocyte adhesion and migration processes at the endothelium (PubMed:9024663, PubMed:9177350). Can activate integrins in both a CX3CR1-dependent and CX3CR1-independent manner (PubMed:23125415, PubMed:24789099). In the presence of CX3CR1, activates integrins by binding to the classical ligand-binding site (site 1) in integrins (PubMed:23125415, PubMed:24789099). In the absence of CX3CR1, binds to a second site (site 2) in integrins which is distinct from site 1 and enhances the binding of other integrin ligands to site 1 (PubMed:23125415, PubMed:24789099).</text>
</comment>
<comment type="function">
    <molecule>Processed fractalkine</molecule>
    <text evidence="13">The soluble form is chemotactic for T-cells and monocytes, but not for neutrophils.</text>
</comment>
<comment type="function">
    <molecule>Fractalkine</molecule>
    <text evidence="13">The membrane-bound form promotes adhesion of those leukocytes to endothelial cells.</text>
</comment>
<comment type="function">
    <text evidence="12 21">(Microbial infection) Mediates the cytoadherence of erythrocytes infected with parasite P.falciparum (strain 3D7) with endothelial cells by interacting with P.falciparum CBP1 and CBP2 expressed at the surface of erythrocytes (PubMed:27653778). The adhesion prevents the elimination of infected erythrocytes by the spleen (Probable).</text>
</comment>
<comment type="subunit">
    <text evidence="8 16">Monomer (PubMed:9931005). Forms a ternary complex with CX3CR1 and ITGAV:ITGB3 or ITGA4:ITGB1 (PubMed:23125415).</text>
</comment>
<comment type="subunit">
    <text evidence="6">(Microbial infection) Interacts with pox virus crmD; this inhibits cell migration mediated by CX3CL1.</text>
</comment>
<comment type="subunit">
    <text evidence="11">(Microbial infection) Interacts (via N-terminus) with human cytomegalovirus (HHV-5) US28.</text>
</comment>
<comment type="subunit">
    <text evidence="12">(Microbial infection) Interacts with P.falciparum (strain 3D7) CBP1 and CBP2 (via their extracellular domains); the interaction mediates the adhesion of infected erythrocytes with endothelial cells.</text>
</comment>
<comment type="interaction">
    <interactant intactId="EBI-15188013">
        <id>P78423</id>
    </interactant>
    <interactant intactId="EBI-703066">
        <id>P05556</id>
        <label>ITGB1</label>
    </interactant>
    <organismsDiffer>false</organismsDiffer>
    <experiments>2</experiments>
</comment>
<comment type="interaction">
    <interactant intactId="EBI-15188013">
        <id>P78423</id>
    </interactant>
    <interactant intactId="EBI-702847">
        <id>P05106</id>
        <label>ITGB3</label>
    </interactant>
    <organismsDiffer>false</organismsDiffer>
    <experiments>6</experiments>
</comment>
<comment type="interaction">
    <interactant intactId="EBI-15188013">
        <id>P78423</id>
    </interactant>
    <interactant intactId="EBI-16147206">
        <id>P69332</id>
        <label>US28</label>
    </interactant>
    <organismsDiffer>true</organismsDiffer>
    <experiments>4</experiments>
</comment>
<comment type="subcellular location">
    <subcellularLocation>
        <location evidence="13">Cell membrane</location>
        <topology evidence="1">Single-pass type I membrane protein</topology>
    </subcellularLocation>
</comment>
<comment type="subcellular location">
    <molecule>Processed fractalkine</molecule>
    <subcellularLocation>
        <location evidence="13">Secreted</location>
    </subcellularLocation>
</comment>
<comment type="tissue specificity">
    <text evidence="9 13 14">Expressed in the seminal plasma, endometrial fluid and follicular fluid (at protein level). Small intestine, colon, testis, prostate, heart, brain, lung, skeletal muscle, kidney and pancreas. Most abundant in the brain and heart.</text>
</comment>
<comment type="induction">
    <text evidence="13">By TNF and IL1/interleukin-1 in pulmonary endothelial cells and umbilical vein endothelial cells.</text>
</comment>
<comment type="PTM">
    <text evidence="13">A soluble short 95 kDa form may be released by proteolytic cleavage from the long membrane-anchored form.</text>
</comment>
<comment type="PTM">
    <text evidence="5 7">O-glycosylated with core 1 or possibly core 8 glycans.</text>
</comment>
<comment type="similarity">
    <text evidence="20">Belongs to the intercrine delta family.</text>
</comment>
<comment type="online information" name="Wikipedia">
    <link uri="https://en.wikipedia.org/wiki/CX3CL1"/>
    <text>CX3CL1 entry</text>
</comment>
<accession>P78423</accession>
<accession>O00672</accession>
<gene>
    <name evidence="18" type="primary">CX3CL1</name>
    <name evidence="17" type="synonym">FKN</name>
    <name evidence="19" type="synonym">NTT</name>
    <name type="synonym">SCYD1</name>
    <name type="ORF">A-152E5.2</name>
</gene>
<dbReference type="EMBL" id="U91835">
    <property type="protein sequence ID" value="AAB50014.1"/>
    <property type="molecule type" value="mRNA"/>
</dbReference>
<dbReference type="EMBL" id="U84487">
    <property type="protein sequence ID" value="AAB49679.1"/>
    <property type="molecule type" value="mRNA"/>
</dbReference>
<dbReference type="EMBL" id="AC004382">
    <property type="protein sequence ID" value="AAC24307.1"/>
    <property type="molecule type" value="Genomic_DNA"/>
</dbReference>
<dbReference type="EMBL" id="BC001163">
    <property type="protein sequence ID" value="AAH01163.1"/>
    <property type="molecule type" value="mRNA"/>
</dbReference>
<dbReference type="EMBL" id="BC016164">
    <property type="protein sequence ID" value="AAH16164.1"/>
    <property type="molecule type" value="mRNA"/>
</dbReference>
<dbReference type="CCDS" id="CCDS10779.1"/>
<dbReference type="RefSeq" id="NP_002987.1">
    <property type="nucleotide sequence ID" value="NM_002996.6"/>
</dbReference>
<dbReference type="PDB" id="1B2T">
    <property type="method" value="NMR"/>
    <property type="chains" value="A=25-100"/>
</dbReference>
<dbReference type="PDB" id="1F2L">
    <property type="method" value="X-ray"/>
    <property type="resolution" value="2.00 A"/>
    <property type="chains" value="A/B/C/D=25-98"/>
</dbReference>
<dbReference type="PDB" id="3ONA">
    <property type="method" value="X-ray"/>
    <property type="resolution" value="2.60 A"/>
    <property type="chains" value="B=24-100"/>
</dbReference>
<dbReference type="PDB" id="4XT1">
    <property type="method" value="X-ray"/>
    <property type="resolution" value="2.89 A"/>
    <property type="chains" value="B=26-101"/>
</dbReference>
<dbReference type="PDB" id="4XT3">
    <property type="method" value="X-ray"/>
    <property type="resolution" value="3.80 A"/>
    <property type="chains" value="B=26-101"/>
</dbReference>
<dbReference type="PDB" id="5WB2">
    <property type="method" value="X-ray"/>
    <property type="resolution" value="3.50 A"/>
    <property type="chains" value="B=34-100"/>
</dbReference>
<dbReference type="PDB" id="7RKF">
    <property type="method" value="EM"/>
    <property type="resolution" value="4.00 A"/>
    <property type="chains" value="L=25-101"/>
</dbReference>
<dbReference type="PDB" id="7RKM">
    <property type="method" value="EM"/>
    <property type="resolution" value="3.50 A"/>
    <property type="chains" value="L=25-101"/>
</dbReference>
<dbReference type="PDB" id="7RKN">
    <property type="method" value="EM"/>
    <property type="resolution" value="3.60 A"/>
    <property type="chains" value="L=25-101"/>
</dbReference>
<dbReference type="PDB" id="7XBX">
    <property type="method" value="EM"/>
    <property type="resolution" value="3.40 A"/>
    <property type="chains" value="R=25-100"/>
</dbReference>
<dbReference type="PDBsum" id="1B2T"/>
<dbReference type="PDBsum" id="1F2L"/>
<dbReference type="PDBsum" id="3ONA"/>
<dbReference type="PDBsum" id="4XT1"/>
<dbReference type="PDBsum" id="4XT3"/>
<dbReference type="PDBsum" id="5WB2"/>
<dbReference type="PDBsum" id="7RKF"/>
<dbReference type="PDBsum" id="7RKM"/>
<dbReference type="PDBsum" id="7RKN"/>
<dbReference type="PDBsum" id="7XBX"/>
<dbReference type="EMDB" id="EMD-24496"/>
<dbReference type="EMDB" id="EMD-24500"/>
<dbReference type="EMDB" id="EMD-24501"/>
<dbReference type="SMR" id="P78423"/>
<dbReference type="BioGRID" id="112278">
    <property type="interactions" value="72"/>
</dbReference>
<dbReference type="DIP" id="DIP-5878N"/>
<dbReference type="FunCoup" id="P78423">
    <property type="interactions" value="725"/>
</dbReference>
<dbReference type="IntAct" id="P78423">
    <property type="interactions" value="81"/>
</dbReference>
<dbReference type="STRING" id="9606.ENSP00000006053"/>
<dbReference type="ChEMBL" id="CHEMBL4630883"/>
<dbReference type="GlyConnect" id="698">
    <property type="glycosylation" value="1 N-Linked glycan (1 site), 4 O-Linked glycans (4 sites)"/>
</dbReference>
<dbReference type="GlyCosmos" id="P78423">
    <property type="glycosylation" value="9 sites, 6 glycans"/>
</dbReference>
<dbReference type="GlyGen" id="P78423">
    <property type="glycosylation" value="13 sites, 6 N-linked glycans (1 site), 6 O-linked glycans (10 sites)"/>
</dbReference>
<dbReference type="iPTMnet" id="P78423"/>
<dbReference type="PhosphoSitePlus" id="P78423"/>
<dbReference type="BioMuta" id="CX3CL1"/>
<dbReference type="DMDM" id="6175080"/>
<dbReference type="CPTAC" id="CPTAC-5967"/>
<dbReference type="jPOST" id="P78423"/>
<dbReference type="MassIVE" id="P78423"/>
<dbReference type="PaxDb" id="9606-ENSP00000006053"/>
<dbReference type="PeptideAtlas" id="P78423"/>
<dbReference type="ProteomicsDB" id="57622"/>
<dbReference type="ABCD" id="P78423">
    <property type="antibodies" value="11 sequenced antibodies"/>
</dbReference>
<dbReference type="Antibodypedia" id="15022">
    <property type="antibodies" value="793 antibodies from 44 providers"/>
</dbReference>
<dbReference type="CPTC" id="P78423">
    <property type="antibodies" value="3 antibodies"/>
</dbReference>
<dbReference type="DNASU" id="6376"/>
<dbReference type="Ensembl" id="ENST00000006053.7">
    <property type="protein sequence ID" value="ENSP00000006053.6"/>
    <property type="gene ID" value="ENSG00000006210.7"/>
</dbReference>
<dbReference type="GeneID" id="6376"/>
<dbReference type="KEGG" id="hsa:6376"/>
<dbReference type="MANE-Select" id="ENST00000006053.7">
    <property type="protein sequence ID" value="ENSP00000006053.6"/>
    <property type="RefSeq nucleotide sequence ID" value="NM_002996.6"/>
    <property type="RefSeq protein sequence ID" value="NP_002987.1"/>
</dbReference>
<dbReference type="UCSC" id="uc002eli.4">
    <property type="organism name" value="human"/>
</dbReference>
<dbReference type="AGR" id="HGNC:10647"/>
<dbReference type="CTD" id="6376"/>
<dbReference type="DisGeNET" id="6376"/>
<dbReference type="GeneCards" id="CX3CL1"/>
<dbReference type="HGNC" id="HGNC:10647">
    <property type="gene designation" value="CX3CL1"/>
</dbReference>
<dbReference type="HPA" id="ENSG00000006210">
    <property type="expression patterns" value="Low tissue specificity"/>
</dbReference>
<dbReference type="MIM" id="601880">
    <property type="type" value="gene"/>
</dbReference>
<dbReference type="neXtProt" id="NX_P78423"/>
<dbReference type="OpenTargets" id="ENSG00000006210"/>
<dbReference type="PharmGKB" id="PA35577"/>
<dbReference type="VEuPathDB" id="HostDB:ENSG00000006210"/>
<dbReference type="eggNOG" id="ENOG502SNIE">
    <property type="taxonomic scope" value="Eukaryota"/>
</dbReference>
<dbReference type="GeneTree" id="ENSGT01130000278316"/>
<dbReference type="InParanoid" id="P78423"/>
<dbReference type="OrthoDB" id="9447832at2759"/>
<dbReference type="PAN-GO" id="P78423">
    <property type="GO annotations" value="15 GO annotations based on evolutionary models"/>
</dbReference>
<dbReference type="PhylomeDB" id="P78423"/>
<dbReference type="TreeFam" id="TF337534"/>
<dbReference type="PathwayCommons" id="P78423"/>
<dbReference type="Reactome" id="R-HSA-380108">
    <property type="pathway name" value="Chemokine receptors bind chemokines"/>
</dbReference>
<dbReference type="Reactome" id="R-HSA-418594">
    <property type="pathway name" value="G alpha (i) signalling events"/>
</dbReference>
<dbReference type="SignaLink" id="P78423"/>
<dbReference type="SIGNOR" id="P78423"/>
<dbReference type="BioGRID-ORCS" id="6376">
    <property type="hits" value="8 hits in 1149 CRISPR screens"/>
</dbReference>
<dbReference type="EvolutionaryTrace" id="P78423"/>
<dbReference type="GeneWiki" id="CX3CL1"/>
<dbReference type="GenomeRNAi" id="6376"/>
<dbReference type="Pharos" id="P78423">
    <property type="development level" value="Tbio"/>
</dbReference>
<dbReference type="PRO" id="PR:P78423"/>
<dbReference type="Proteomes" id="UP000005640">
    <property type="component" value="Chromosome 16"/>
</dbReference>
<dbReference type="RNAct" id="P78423">
    <property type="molecule type" value="protein"/>
</dbReference>
<dbReference type="Bgee" id="ENSG00000006210">
    <property type="expression patterns" value="Expressed in right lung and 186 other cell types or tissues"/>
</dbReference>
<dbReference type="ExpressionAtlas" id="P78423">
    <property type="expression patterns" value="baseline and differential"/>
</dbReference>
<dbReference type="GO" id="GO:0042995">
    <property type="term" value="C:cell projection"/>
    <property type="evidence" value="ECO:0000250"/>
    <property type="project" value="ARUK-UCL"/>
</dbReference>
<dbReference type="GO" id="GO:0009986">
    <property type="term" value="C:cell surface"/>
    <property type="evidence" value="ECO:0000314"/>
    <property type="project" value="UniProtKB"/>
</dbReference>
<dbReference type="GO" id="GO:0005576">
    <property type="term" value="C:extracellular region"/>
    <property type="evidence" value="ECO:0000314"/>
    <property type="project" value="UniProtKB"/>
</dbReference>
<dbReference type="GO" id="GO:0005615">
    <property type="term" value="C:extracellular space"/>
    <property type="evidence" value="ECO:0000318"/>
    <property type="project" value="GO_Central"/>
</dbReference>
<dbReference type="GO" id="GO:0016020">
    <property type="term" value="C:membrane"/>
    <property type="evidence" value="ECO:0000314"/>
    <property type="project" value="UniProtKB"/>
</dbReference>
<dbReference type="GO" id="GO:0043005">
    <property type="term" value="C:neuron projection"/>
    <property type="evidence" value="ECO:0007669"/>
    <property type="project" value="Ensembl"/>
</dbReference>
<dbReference type="GO" id="GO:0043025">
    <property type="term" value="C:neuronal cell body"/>
    <property type="evidence" value="ECO:0000250"/>
    <property type="project" value="ARUK-UCL"/>
</dbReference>
<dbReference type="GO" id="GO:0048471">
    <property type="term" value="C:perinuclear region of cytoplasm"/>
    <property type="evidence" value="ECO:0000250"/>
    <property type="project" value="ARUK-UCL"/>
</dbReference>
<dbReference type="GO" id="GO:0005886">
    <property type="term" value="C:plasma membrane"/>
    <property type="evidence" value="ECO:0000304"/>
    <property type="project" value="ARUK-UCL"/>
</dbReference>
<dbReference type="GO" id="GO:0048020">
    <property type="term" value="F:CCR chemokine receptor binding"/>
    <property type="evidence" value="ECO:0000318"/>
    <property type="project" value="GO_Central"/>
</dbReference>
<dbReference type="GO" id="GO:0042056">
    <property type="term" value="F:chemoattractant activity"/>
    <property type="evidence" value="ECO:0000315"/>
    <property type="project" value="ARUK-UCL"/>
</dbReference>
<dbReference type="GO" id="GO:0008009">
    <property type="term" value="F:chemokine activity"/>
    <property type="evidence" value="ECO:0000314"/>
    <property type="project" value="UniProtKB"/>
</dbReference>
<dbReference type="GO" id="GO:0031737">
    <property type="term" value="F:CX3C chemokine receptor binding"/>
    <property type="evidence" value="ECO:0000314"/>
    <property type="project" value="UniProtKB"/>
</dbReference>
<dbReference type="GO" id="GO:0045237">
    <property type="term" value="F:CXCR1 chemokine receptor binding"/>
    <property type="evidence" value="ECO:0000353"/>
    <property type="project" value="ARUK-UCL"/>
</dbReference>
<dbReference type="GO" id="GO:0005178">
    <property type="term" value="F:integrin binding"/>
    <property type="evidence" value="ECO:0000314"/>
    <property type="project" value="UniProtKB"/>
</dbReference>
<dbReference type="GO" id="GO:0005102">
    <property type="term" value="F:signaling receptor binding"/>
    <property type="evidence" value="ECO:0000304"/>
    <property type="project" value="UniProtKB"/>
</dbReference>
<dbReference type="GO" id="GO:0060055">
    <property type="term" value="P:angiogenesis involved in wound healing"/>
    <property type="evidence" value="ECO:0007669"/>
    <property type="project" value="Ensembl"/>
</dbReference>
<dbReference type="GO" id="GO:0061844">
    <property type="term" value="P:antimicrobial humoral immune response mediated by antimicrobial peptide"/>
    <property type="evidence" value="ECO:0000318"/>
    <property type="project" value="GO_Central"/>
</dbReference>
<dbReference type="GO" id="GO:0035425">
    <property type="term" value="P:autocrine signaling"/>
    <property type="evidence" value="ECO:0000250"/>
    <property type="project" value="ARUK-UCL"/>
</dbReference>
<dbReference type="GO" id="GO:0007155">
    <property type="term" value="P:cell adhesion"/>
    <property type="evidence" value="ECO:0000353"/>
    <property type="project" value="ARUK-UCL"/>
</dbReference>
<dbReference type="GO" id="GO:0060326">
    <property type="term" value="P:cell chemotaxis"/>
    <property type="evidence" value="ECO:0000314"/>
    <property type="project" value="ARUK-UCL"/>
</dbReference>
<dbReference type="GO" id="GO:0098609">
    <property type="term" value="P:cell-cell adhesion"/>
    <property type="evidence" value="ECO:0000250"/>
    <property type="project" value="ARUK-UCL"/>
</dbReference>
<dbReference type="GO" id="GO:0007267">
    <property type="term" value="P:cell-cell signaling"/>
    <property type="evidence" value="ECO:0000304"/>
    <property type="project" value="ARUK-UCL"/>
</dbReference>
<dbReference type="GO" id="GO:0070098">
    <property type="term" value="P:chemokine-mediated signaling pathway"/>
    <property type="evidence" value="ECO:0000314"/>
    <property type="project" value="ARUK-UCL"/>
</dbReference>
<dbReference type="GO" id="GO:0006935">
    <property type="term" value="P:chemotaxis"/>
    <property type="evidence" value="ECO:0000314"/>
    <property type="project" value="UniProtKB"/>
</dbReference>
<dbReference type="GO" id="GO:0019221">
    <property type="term" value="P:cytokine-mediated signaling pathway"/>
    <property type="evidence" value="ECO:0000304"/>
    <property type="project" value="UniProtKB"/>
</dbReference>
<dbReference type="GO" id="GO:0006952">
    <property type="term" value="P:defense response"/>
    <property type="evidence" value="ECO:0000304"/>
    <property type="project" value="UniProtKB"/>
</dbReference>
<dbReference type="GO" id="GO:0048245">
    <property type="term" value="P:eosinophil chemotaxis"/>
    <property type="evidence" value="ECO:0000318"/>
    <property type="project" value="GO_Central"/>
</dbReference>
<dbReference type="GO" id="GO:0097192">
    <property type="term" value="P:extrinsic apoptotic signaling pathway in absence of ligand"/>
    <property type="evidence" value="ECO:0007669"/>
    <property type="project" value="Ensembl"/>
</dbReference>
<dbReference type="GO" id="GO:0007186">
    <property type="term" value="P:G protein-coupled receptor signaling pathway"/>
    <property type="evidence" value="ECO:0000250"/>
    <property type="project" value="ARUK-UCL"/>
</dbReference>
<dbReference type="GO" id="GO:0006955">
    <property type="term" value="P:immune response"/>
    <property type="evidence" value="ECO:0000304"/>
    <property type="project" value="UniProtKB"/>
</dbReference>
<dbReference type="GO" id="GO:0006954">
    <property type="term" value="P:inflammatory response"/>
    <property type="evidence" value="ECO:0000318"/>
    <property type="project" value="GO_Central"/>
</dbReference>
<dbReference type="GO" id="GO:0033622">
    <property type="term" value="P:integrin activation"/>
    <property type="evidence" value="ECO:0000315"/>
    <property type="project" value="UniProtKB"/>
</dbReference>
<dbReference type="GO" id="GO:0050902">
    <property type="term" value="P:leukocyte adhesive activation"/>
    <property type="evidence" value="ECO:0000304"/>
    <property type="project" value="UniProtKB"/>
</dbReference>
<dbReference type="GO" id="GO:0030595">
    <property type="term" value="P:leukocyte chemotaxis"/>
    <property type="evidence" value="ECO:0000304"/>
    <property type="project" value="UniProtKB"/>
</dbReference>
<dbReference type="GO" id="GO:0002523">
    <property type="term" value="P:leukocyte migration involved in inflammatory response"/>
    <property type="evidence" value="ECO:0000315"/>
    <property type="project" value="UniProtKB"/>
</dbReference>
<dbReference type="GO" id="GO:0048247">
    <property type="term" value="P:lymphocyte chemotaxis"/>
    <property type="evidence" value="ECO:0007669"/>
    <property type="project" value="Ensembl"/>
</dbReference>
<dbReference type="GO" id="GO:0048246">
    <property type="term" value="P:macrophage chemotaxis"/>
    <property type="evidence" value="ECO:0007669"/>
    <property type="project" value="Ensembl"/>
</dbReference>
<dbReference type="GO" id="GO:0001774">
    <property type="term" value="P:microglial cell activation"/>
    <property type="evidence" value="ECO:0000250"/>
    <property type="project" value="ARUK-UCL"/>
</dbReference>
<dbReference type="GO" id="GO:0061518">
    <property type="term" value="P:microglial cell proliferation"/>
    <property type="evidence" value="ECO:0000315"/>
    <property type="project" value="ARUK-UCL"/>
</dbReference>
<dbReference type="GO" id="GO:0043066">
    <property type="term" value="P:negative regulation of apoptotic process"/>
    <property type="evidence" value="ECO:0000315"/>
    <property type="project" value="ARUK-UCL"/>
</dbReference>
<dbReference type="GO" id="GO:2001234">
    <property type="term" value="P:negative regulation of apoptotic signaling pathway"/>
    <property type="evidence" value="ECO:0000316"/>
    <property type="project" value="ARUK-UCL"/>
</dbReference>
<dbReference type="GO" id="GO:0030336">
    <property type="term" value="P:negative regulation of cell migration"/>
    <property type="evidence" value="ECO:0000314"/>
    <property type="project" value="BHF-UCL"/>
</dbReference>
<dbReference type="GO" id="GO:0010812">
    <property type="term" value="P:negative regulation of cell-substrate adhesion"/>
    <property type="evidence" value="ECO:0000303"/>
    <property type="project" value="ARUK-UCL"/>
</dbReference>
<dbReference type="GO" id="GO:2001240">
    <property type="term" value="P:negative regulation of extrinsic apoptotic signaling pathway in absence of ligand"/>
    <property type="evidence" value="ECO:0007669"/>
    <property type="project" value="Ensembl"/>
</dbReference>
<dbReference type="GO" id="GO:1900450">
    <property type="term" value="P:negative regulation of glutamate receptor signaling pathway"/>
    <property type="evidence" value="ECO:0000250"/>
    <property type="project" value="ARUK-UCL"/>
</dbReference>
<dbReference type="GO" id="GO:0110091">
    <property type="term" value="P:negative regulation of hippocampal neuron apoptotic process"/>
    <property type="evidence" value="ECO:0000316"/>
    <property type="project" value="ARUK-UCL"/>
</dbReference>
<dbReference type="GO" id="GO:0032690">
    <property type="term" value="P:negative regulation of interleukin-1 alpha production"/>
    <property type="evidence" value="ECO:0000250"/>
    <property type="project" value="ARUK-UCL"/>
</dbReference>
<dbReference type="GO" id="GO:0032691">
    <property type="term" value="P:negative regulation of interleukin-1 beta production"/>
    <property type="evidence" value="ECO:0000304"/>
    <property type="project" value="ARUK-UCL"/>
</dbReference>
<dbReference type="GO" id="GO:0032715">
    <property type="term" value="P:negative regulation of interleukin-6 production"/>
    <property type="evidence" value="ECO:0000304"/>
    <property type="project" value="ARUK-UCL"/>
</dbReference>
<dbReference type="GO" id="GO:1903979">
    <property type="term" value="P:negative regulation of microglial cell activation"/>
    <property type="evidence" value="ECO:0000250"/>
    <property type="project" value="ARUK-UCL"/>
</dbReference>
<dbReference type="GO" id="GO:2001223">
    <property type="term" value="P:negative regulation of neuron migration"/>
    <property type="evidence" value="ECO:0000304"/>
    <property type="project" value="ARUK-UCL"/>
</dbReference>
<dbReference type="GO" id="GO:0032720">
    <property type="term" value="P:negative regulation of tumor necrosis factor production"/>
    <property type="evidence" value="ECO:0000314"/>
    <property type="project" value="ARUK-UCL"/>
</dbReference>
<dbReference type="GO" id="GO:0070050">
    <property type="term" value="P:neuron cellular homeostasis"/>
    <property type="evidence" value="ECO:0000250"/>
    <property type="project" value="ARUK-UCL"/>
</dbReference>
<dbReference type="GO" id="GO:0016322">
    <property type="term" value="P:neuron remodeling"/>
    <property type="evidence" value="ECO:0000304"/>
    <property type="project" value="ARUK-UCL"/>
</dbReference>
<dbReference type="GO" id="GO:0030593">
    <property type="term" value="P:neutrophil chemotaxis"/>
    <property type="evidence" value="ECO:0007669"/>
    <property type="project" value="Ensembl"/>
</dbReference>
<dbReference type="GO" id="GO:0050918">
    <property type="term" value="P:positive chemotaxis"/>
    <property type="evidence" value="ECO:0000315"/>
    <property type="project" value="ARUK-UCL"/>
</dbReference>
<dbReference type="GO" id="GO:0032233">
    <property type="term" value="P:positive regulation of actin filament bundle assembly"/>
    <property type="evidence" value="ECO:0000316"/>
    <property type="project" value="ARUK-UCL"/>
</dbReference>
<dbReference type="GO" id="GO:0045766">
    <property type="term" value="P:positive regulation of angiogenesis"/>
    <property type="evidence" value="ECO:0007669"/>
    <property type="project" value="Ensembl"/>
</dbReference>
<dbReference type="GO" id="GO:0051041">
    <property type="term" value="P:positive regulation of calcium-independent cell-cell adhesion"/>
    <property type="evidence" value="ECO:0000314"/>
    <property type="project" value="UniProtKB"/>
</dbReference>
<dbReference type="GO" id="GO:0043123">
    <property type="term" value="P:positive regulation of canonical NF-kappaB signal transduction"/>
    <property type="evidence" value="ECO:0000316"/>
    <property type="project" value="ARUK-UCL"/>
</dbReference>
<dbReference type="GO" id="GO:0030335">
    <property type="term" value="P:positive regulation of cell migration"/>
    <property type="evidence" value="ECO:0000318"/>
    <property type="project" value="GO_Central"/>
</dbReference>
<dbReference type="GO" id="GO:0008284">
    <property type="term" value="P:positive regulation of cell population proliferation"/>
    <property type="evidence" value="ECO:0000315"/>
    <property type="project" value="ARUK-UCL"/>
</dbReference>
<dbReference type="GO" id="GO:0001954">
    <property type="term" value="P:positive regulation of cell-matrix adhesion"/>
    <property type="evidence" value="ECO:0000304"/>
    <property type="project" value="ARUK-UCL"/>
</dbReference>
<dbReference type="GO" id="GO:0070374">
    <property type="term" value="P:positive regulation of ERK1 and ERK2 cascade"/>
    <property type="evidence" value="ECO:0000304"/>
    <property type="project" value="ARUK-UCL"/>
</dbReference>
<dbReference type="GO" id="GO:0050729">
    <property type="term" value="P:positive regulation of inflammatory response"/>
    <property type="evidence" value="ECO:0000270"/>
    <property type="project" value="UniProtKB"/>
</dbReference>
<dbReference type="GO" id="GO:0043410">
    <property type="term" value="P:positive regulation of MAPK cascade"/>
    <property type="evidence" value="ECO:0000316"/>
    <property type="project" value="ARUK-UCL"/>
</dbReference>
<dbReference type="GO" id="GO:1904141">
    <property type="term" value="P:positive regulation of microglial cell migration"/>
    <property type="evidence" value="ECO:0000314"/>
    <property type="project" value="ARUK-UCL"/>
</dbReference>
<dbReference type="GO" id="GO:0002052">
    <property type="term" value="P:positive regulation of neuroblast proliferation"/>
    <property type="evidence" value="ECO:0000250"/>
    <property type="project" value="ARUK-UCL"/>
</dbReference>
<dbReference type="GO" id="GO:0010976">
    <property type="term" value="P:positive regulation of neuron projection development"/>
    <property type="evidence" value="ECO:0000250"/>
    <property type="project" value="ARUK-UCL"/>
</dbReference>
<dbReference type="GO" id="GO:0051897">
    <property type="term" value="P:positive regulation of phosphatidylinositol 3-kinase/protein kinase B signal transduction"/>
    <property type="evidence" value="ECO:0000316"/>
    <property type="project" value="ARUK-UCL"/>
</dbReference>
<dbReference type="GO" id="GO:0051281">
    <property type="term" value="P:positive regulation of release of sequestered calcium ion into cytosol"/>
    <property type="evidence" value="ECO:0000316"/>
    <property type="project" value="ARUK-UCL"/>
</dbReference>
<dbReference type="GO" id="GO:0048661">
    <property type="term" value="P:positive regulation of smooth muscle cell proliferation"/>
    <property type="evidence" value="ECO:0000250"/>
    <property type="project" value="ARUK-UCL"/>
</dbReference>
<dbReference type="GO" id="GO:0045944">
    <property type="term" value="P:positive regulation of transcription by RNA polymerase II"/>
    <property type="evidence" value="ECO:0000250"/>
    <property type="project" value="ARUK-UCL"/>
</dbReference>
<dbReference type="GO" id="GO:0032914">
    <property type="term" value="P:positive regulation of transforming growth factor beta1 production"/>
    <property type="evidence" value="ECO:0007669"/>
    <property type="project" value="Ensembl"/>
</dbReference>
<dbReference type="GO" id="GO:0031664">
    <property type="term" value="P:regulation of lipopolysaccharide-mediated signaling pathway"/>
    <property type="evidence" value="ECO:0000314"/>
    <property type="project" value="ARUK-UCL"/>
</dbReference>
<dbReference type="GO" id="GO:0050767">
    <property type="term" value="P:regulation of neurogenesis"/>
    <property type="evidence" value="ECO:0000304"/>
    <property type="project" value="ARUK-UCL"/>
</dbReference>
<dbReference type="GO" id="GO:0048167">
    <property type="term" value="P:regulation of synaptic plasticity"/>
    <property type="evidence" value="ECO:0000304"/>
    <property type="project" value="ARUK-UCL"/>
</dbReference>
<dbReference type="GO" id="GO:0002931">
    <property type="term" value="P:response to ischemia"/>
    <property type="evidence" value="ECO:0000250"/>
    <property type="project" value="ARUK-UCL"/>
</dbReference>
<dbReference type="GO" id="GO:0098883">
    <property type="term" value="P:synapse pruning"/>
    <property type="evidence" value="ECO:0000304"/>
    <property type="project" value="ARUK-UCL"/>
</dbReference>
<dbReference type="CDD" id="cd00274">
    <property type="entry name" value="Chemokine_CX3C"/>
    <property type="match status" value="1"/>
</dbReference>
<dbReference type="FunFam" id="2.40.50.40:FF:000012">
    <property type="entry name" value="C-C motif chemokine"/>
    <property type="match status" value="1"/>
</dbReference>
<dbReference type="Gene3D" id="2.40.50.40">
    <property type="match status" value="1"/>
</dbReference>
<dbReference type="InterPro" id="IPR039809">
    <property type="entry name" value="Chemokine_b/g/d"/>
</dbReference>
<dbReference type="InterPro" id="IPR034127">
    <property type="entry name" value="Chemokine_CX3C"/>
</dbReference>
<dbReference type="InterPro" id="IPR001811">
    <property type="entry name" value="Chemokine_IL8-like_dom"/>
</dbReference>
<dbReference type="InterPro" id="IPR036048">
    <property type="entry name" value="Interleukin_8-like_sf"/>
</dbReference>
<dbReference type="PANTHER" id="PTHR12015:SF92">
    <property type="entry name" value="FRACTALKINE"/>
    <property type="match status" value="1"/>
</dbReference>
<dbReference type="PANTHER" id="PTHR12015">
    <property type="entry name" value="SMALL INDUCIBLE CYTOKINE A"/>
    <property type="match status" value="1"/>
</dbReference>
<dbReference type="Pfam" id="PF00048">
    <property type="entry name" value="IL8"/>
    <property type="match status" value="1"/>
</dbReference>
<dbReference type="PRINTS" id="PR01721">
    <property type="entry name" value="FRACTALKINE"/>
</dbReference>
<dbReference type="SMART" id="SM00199">
    <property type="entry name" value="SCY"/>
    <property type="match status" value="1"/>
</dbReference>
<dbReference type="SUPFAM" id="SSF54117">
    <property type="entry name" value="Interleukin 8-like chemokines"/>
    <property type="match status" value="1"/>
</dbReference>
<sequence>MAPISLSWLLRLATFCHLTVLLAGQHHGVTKCNITCSKMTSKIPVALLIHYQQNQASCGKRAIILETRQHRLFCADPKEQWVKDAMQHLDRQAAALTRNGGTFEKQIGEVKPRTTPAAGGMDESVVLEPEATGESSSLEPTPSSQEAQRALGTSPELPTGVTGSSGTRLPPTPKAQDGGPVGTELFRVPPVSTAATWQSSAPHQPGPSLWAEAKTSEAPSTQDPSTQASTASSPAPEENAPSEGQRVWGQGQSPRPENSLEREEMGPVPAHTDAFQDWGPGSMAHVSVVPVSSEGTPSREPVASGSWTPKAEEPIHATMDPQRLGVLITPVPDAQAATRRQAVGLLAFLGLLFCLGVAMFTYQSLQGCPRKMAGEMAEGLRYIPRSCGSNSYVLVPV</sequence>
<feature type="signal peptide">
    <location>
        <begin position="1"/>
        <end position="24"/>
    </location>
</feature>
<feature type="chain" id="PRO_0000005252" description="Fractalkine">
    <location>
        <begin position="25"/>
        <end position="397"/>
    </location>
</feature>
<feature type="chain" id="PRO_0000296224" description="Processed fractalkine">
    <location>
        <begin position="25"/>
        <end position="339" status="uncertain"/>
    </location>
</feature>
<feature type="topological domain" description="Extracellular" evidence="1">
    <location>
        <begin position="25"/>
        <end position="341"/>
    </location>
</feature>
<feature type="transmembrane region" description="Helical" evidence="1">
    <location>
        <begin position="342"/>
        <end position="362"/>
    </location>
</feature>
<feature type="topological domain" description="Cytoplasmic" evidence="1">
    <location>
        <begin position="363"/>
        <end position="397"/>
    </location>
</feature>
<feature type="region of interest" description="Chemokine and involved in interaction with ITGAV:ITGB3 and ITGA4:ITGB1" evidence="8">
    <location>
        <begin position="25"/>
        <end position="100"/>
    </location>
</feature>
<feature type="region of interest" description="Mucin-like stalk">
    <location>
        <begin position="101"/>
        <end position="341"/>
    </location>
</feature>
<feature type="region of interest" description="Disordered" evidence="2">
    <location>
        <begin position="128"/>
        <end position="265"/>
    </location>
</feature>
<feature type="region of interest" description="Disordered" evidence="2">
    <location>
        <begin position="289"/>
        <end position="309"/>
    </location>
</feature>
<feature type="compositionally biased region" description="Polar residues" evidence="2">
    <location>
        <begin position="133"/>
        <end position="147"/>
    </location>
</feature>
<feature type="compositionally biased region" description="Polar residues" evidence="2">
    <location>
        <begin position="193"/>
        <end position="202"/>
    </location>
</feature>
<feature type="compositionally biased region" description="Low complexity" evidence="2">
    <location>
        <begin position="219"/>
        <end position="243"/>
    </location>
</feature>
<feature type="site" description="Cleavage; to produce soluble form" evidence="1">
    <location>
        <begin position="339"/>
        <end position="340"/>
    </location>
</feature>
<feature type="glycosylation site" description="N-linked (GlcNAc...) asparagine" evidence="1">
    <location>
        <position position="33"/>
    </location>
</feature>
<feature type="glycosylation site" description="O-linked (GalNAc...) threonine" evidence="7">
    <location>
        <position position="183"/>
    </location>
</feature>
<feature type="glycosylation site" description="O-linked (GalNAc...) serine" evidence="5 7">
    <location>
        <position position="253"/>
    </location>
</feature>
<feature type="glycosylation site" description="O-linked (GalNAc...) threonine" evidence="5 7">
    <location>
        <position position="329"/>
    </location>
</feature>
<feature type="disulfide bond" evidence="3">
    <location>
        <begin position="32"/>
        <end position="58"/>
    </location>
</feature>
<feature type="disulfide bond" evidence="3">
    <location>
        <begin position="36"/>
        <end position="74"/>
    </location>
</feature>
<feature type="sequence variant" id="VAR_048714" description="In dbSNP:rs35860084.">
    <original>A</original>
    <variation>V</variation>
    <location>
        <position position="240"/>
    </location>
</feature>
<feature type="mutagenesis site" description="Reduced binding to integrin ITGAV:ITGB3, but no effect on binding to CX3CR1; when associated with A-61." evidence="8">
    <original>K</original>
    <variation>A</variation>
    <location>
        <position position="60"/>
    </location>
</feature>
<feature type="mutagenesis site" description="Dominant-negative mutant, reduced binding to integrins ITGAV:ITGB3 and ITGA4:ITGB1, no effect on binding to CX3CR1, defective in ternary complex formation, integrin activation and fractalkine signaling and suppression of leukocyte recruitment in the peritonitis model in vivo; when associated with E-61." evidence="8 10">
    <original>K</original>
    <variation>E</variation>
    <location>
        <position position="60"/>
    </location>
</feature>
<feature type="mutagenesis site" description="Reduced binding to integrin ITGAV:ITGB3, but no effect on binding to CX3CR1; when associated with A-60." evidence="8">
    <original>R</original>
    <variation>A</variation>
    <location>
        <position position="61"/>
    </location>
</feature>
<feature type="mutagenesis site" description="Dominant-negative mutant, reduced binding to integrins ITGAV:ITGB3 and ITGA4:ITGB1, no effect on binding to CX3CR1, defective in ternary complex formation, integrin activation and fractalkine signaling and suppression of leukocyte recruitment in the peritonitis model in vivo; when associated with E-60." evidence="8 10">
    <original>R</original>
    <variation>E</variation>
    <location>
        <position position="61"/>
    </location>
</feature>
<feature type="mutagenesis site" description="Loss of binding to CX3CR1 and ability to induce chemotaxis but no effect on binding to integrins." evidence="8">
    <original>R</original>
    <variation>A</variation>
    <location>
        <position position="71"/>
    </location>
</feature>
<feature type="mutagenesis site" description="Little or no effect on binding to integrin ITGAV:ITGB3." evidence="8">
    <original>K</original>
    <variation>A</variation>
    <location>
        <position position="78"/>
    </location>
</feature>
<feature type="mutagenesis site" description="Little or no effect on binding to integrin ITGAV:ITGB3; when associated with A-83." evidence="8">
    <original>K</original>
    <variation>A</variation>
    <location>
        <position position="78"/>
    </location>
</feature>
<feature type="mutagenesis site" description="Little or no effect on binding to integrin ITGAV:ITGB3; when associated with A-78." evidence="8">
    <original>K</original>
    <variation>A</variation>
    <location>
        <position position="83"/>
    </location>
</feature>
<feature type="helix" evidence="27">
    <location>
        <begin position="27"/>
        <end position="29"/>
    </location>
</feature>
<feature type="strand" evidence="25">
    <location>
        <begin position="34"/>
        <end position="36"/>
    </location>
</feature>
<feature type="helix" evidence="25">
    <location>
        <begin position="45"/>
        <end position="47"/>
    </location>
</feature>
<feature type="strand" evidence="25">
    <location>
        <begin position="48"/>
        <end position="53"/>
    </location>
</feature>
<feature type="helix" evidence="25">
    <location>
        <begin position="56"/>
        <end position="58"/>
    </location>
</feature>
<feature type="strand" evidence="26">
    <location>
        <begin position="59"/>
        <end position="61"/>
    </location>
</feature>
<feature type="strand" evidence="25">
    <location>
        <begin position="63"/>
        <end position="67"/>
    </location>
</feature>
<feature type="turn" evidence="26">
    <location>
        <begin position="68"/>
        <end position="70"/>
    </location>
</feature>
<feature type="strand" evidence="25">
    <location>
        <begin position="72"/>
        <end position="75"/>
    </location>
</feature>
<feature type="helix" evidence="25">
    <location>
        <begin position="80"/>
        <end position="90"/>
    </location>
</feature>
<feature type="helix" evidence="25">
    <location>
        <begin position="93"/>
        <end position="96"/>
    </location>
</feature>